<organism>
    <name type="scientific">Fervidobacterium nodosum (strain ATCC 35602 / DSM 5306 / Rt17-B1)</name>
    <dbReference type="NCBI Taxonomy" id="381764"/>
    <lineage>
        <taxon>Bacteria</taxon>
        <taxon>Thermotogati</taxon>
        <taxon>Thermotogota</taxon>
        <taxon>Thermotogae</taxon>
        <taxon>Thermotogales</taxon>
        <taxon>Fervidobacteriaceae</taxon>
        <taxon>Fervidobacterium</taxon>
    </lineage>
</organism>
<dbReference type="EMBL" id="CP000771">
    <property type="protein sequence ID" value="ABS60979.1"/>
    <property type="molecule type" value="Genomic_DNA"/>
</dbReference>
<dbReference type="RefSeq" id="WP_011994292.1">
    <property type="nucleotide sequence ID" value="NC_009718.1"/>
</dbReference>
<dbReference type="SMR" id="A7HM46"/>
<dbReference type="STRING" id="381764.Fnod_1132"/>
<dbReference type="KEGG" id="fno:Fnod_1132"/>
<dbReference type="eggNOG" id="COG0092">
    <property type="taxonomic scope" value="Bacteria"/>
</dbReference>
<dbReference type="HOGENOM" id="CLU_058591_0_2_0"/>
<dbReference type="OrthoDB" id="9806396at2"/>
<dbReference type="Proteomes" id="UP000002415">
    <property type="component" value="Chromosome"/>
</dbReference>
<dbReference type="GO" id="GO:0022627">
    <property type="term" value="C:cytosolic small ribosomal subunit"/>
    <property type="evidence" value="ECO:0007669"/>
    <property type="project" value="TreeGrafter"/>
</dbReference>
<dbReference type="GO" id="GO:0003729">
    <property type="term" value="F:mRNA binding"/>
    <property type="evidence" value="ECO:0007669"/>
    <property type="project" value="UniProtKB-UniRule"/>
</dbReference>
<dbReference type="GO" id="GO:0019843">
    <property type="term" value="F:rRNA binding"/>
    <property type="evidence" value="ECO:0007669"/>
    <property type="project" value="UniProtKB-UniRule"/>
</dbReference>
<dbReference type="GO" id="GO:0003735">
    <property type="term" value="F:structural constituent of ribosome"/>
    <property type="evidence" value="ECO:0007669"/>
    <property type="project" value="InterPro"/>
</dbReference>
<dbReference type="GO" id="GO:0006412">
    <property type="term" value="P:translation"/>
    <property type="evidence" value="ECO:0007669"/>
    <property type="project" value="UniProtKB-UniRule"/>
</dbReference>
<dbReference type="CDD" id="cd02412">
    <property type="entry name" value="KH-II_30S_S3"/>
    <property type="match status" value="1"/>
</dbReference>
<dbReference type="FunFam" id="3.30.300.20:FF:000001">
    <property type="entry name" value="30S ribosomal protein S3"/>
    <property type="match status" value="1"/>
</dbReference>
<dbReference type="Gene3D" id="3.30.300.20">
    <property type="match status" value="1"/>
</dbReference>
<dbReference type="Gene3D" id="3.30.1140.32">
    <property type="entry name" value="Ribosomal protein S3, C-terminal domain"/>
    <property type="match status" value="1"/>
</dbReference>
<dbReference type="HAMAP" id="MF_01309_B">
    <property type="entry name" value="Ribosomal_uS3_B"/>
    <property type="match status" value="1"/>
</dbReference>
<dbReference type="InterPro" id="IPR004087">
    <property type="entry name" value="KH_dom"/>
</dbReference>
<dbReference type="InterPro" id="IPR015946">
    <property type="entry name" value="KH_dom-like_a/b"/>
</dbReference>
<dbReference type="InterPro" id="IPR004044">
    <property type="entry name" value="KH_dom_type_2"/>
</dbReference>
<dbReference type="InterPro" id="IPR009019">
    <property type="entry name" value="KH_sf_prok-type"/>
</dbReference>
<dbReference type="InterPro" id="IPR036419">
    <property type="entry name" value="Ribosomal_S3_C_sf"/>
</dbReference>
<dbReference type="InterPro" id="IPR005704">
    <property type="entry name" value="Ribosomal_uS3_bac-typ"/>
</dbReference>
<dbReference type="InterPro" id="IPR001351">
    <property type="entry name" value="Ribosomal_uS3_C"/>
</dbReference>
<dbReference type="InterPro" id="IPR018280">
    <property type="entry name" value="Ribosomal_uS3_CS"/>
</dbReference>
<dbReference type="NCBIfam" id="TIGR01009">
    <property type="entry name" value="rpsC_bact"/>
    <property type="match status" value="1"/>
</dbReference>
<dbReference type="PANTHER" id="PTHR11760">
    <property type="entry name" value="30S/40S RIBOSOMAL PROTEIN S3"/>
    <property type="match status" value="1"/>
</dbReference>
<dbReference type="PANTHER" id="PTHR11760:SF19">
    <property type="entry name" value="SMALL RIBOSOMAL SUBUNIT PROTEIN US3C"/>
    <property type="match status" value="1"/>
</dbReference>
<dbReference type="Pfam" id="PF07650">
    <property type="entry name" value="KH_2"/>
    <property type="match status" value="1"/>
</dbReference>
<dbReference type="Pfam" id="PF00189">
    <property type="entry name" value="Ribosomal_S3_C"/>
    <property type="match status" value="1"/>
</dbReference>
<dbReference type="SMART" id="SM00322">
    <property type="entry name" value="KH"/>
    <property type="match status" value="1"/>
</dbReference>
<dbReference type="SUPFAM" id="SSF54814">
    <property type="entry name" value="Prokaryotic type KH domain (KH-domain type II)"/>
    <property type="match status" value="1"/>
</dbReference>
<dbReference type="SUPFAM" id="SSF54821">
    <property type="entry name" value="Ribosomal protein S3 C-terminal domain"/>
    <property type="match status" value="1"/>
</dbReference>
<dbReference type="PROSITE" id="PS50823">
    <property type="entry name" value="KH_TYPE_2"/>
    <property type="match status" value="1"/>
</dbReference>
<dbReference type="PROSITE" id="PS00548">
    <property type="entry name" value="RIBOSOMAL_S3"/>
    <property type="match status" value="1"/>
</dbReference>
<comment type="function">
    <text evidence="1">Binds the lower part of the 30S subunit head. Binds mRNA in the 70S ribosome, positioning it for translation.</text>
</comment>
<comment type="subunit">
    <text evidence="1">Part of the 30S ribosomal subunit. Forms a tight complex with proteins S10 and S14.</text>
</comment>
<comment type="similarity">
    <text evidence="1">Belongs to the universal ribosomal protein uS3 family.</text>
</comment>
<gene>
    <name evidence="1" type="primary">rpsC</name>
    <name type="ordered locus">Fnod_1132</name>
</gene>
<sequence>MGQKVHPKGFRLGLTSEWDAQWFNEKKYSEYLLEDEAIRNFIKKNYNQAGIARVFVQRPDAERVLVSIYAARPGILIGKKGAGITELRQALEANFNRKFGIDIIELKTPETEASLVAESIAQKIEKRASYKIVMKRAITAALRRGARGIKIMVSGRLAGAEIARTEWYLKGRLPLQTLRSVIDYSTARAETKYGTIGIKVWIYKGDQNI</sequence>
<feature type="chain" id="PRO_1000086121" description="Small ribosomal subunit protein uS3">
    <location>
        <begin position="1"/>
        <end position="209"/>
    </location>
</feature>
<feature type="domain" description="KH type-2" evidence="1">
    <location>
        <begin position="38"/>
        <end position="107"/>
    </location>
</feature>
<reference key="1">
    <citation type="submission" date="2007-07" db="EMBL/GenBank/DDBJ databases">
        <title>Complete sequence of Fervidobacterium nodosum Rt17-B1.</title>
        <authorList>
            <consortium name="US DOE Joint Genome Institute"/>
            <person name="Copeland A."/>
            <person name="Lucas S."/>
            <person name="Lapidus A."/>
            <person name="Barry K."/>
            <person name="Glavina del Rio T."/>
            <person name="Dalin E."/>
            <person name="Tice H."/>
            <person name="Pitluck S."/>
            <person name="Saunders E."/>
            <person name="Brettin T."/>
            <person name="Bruce D."/>
            <person name="Detter J.C."/>
            <person name="Han C."/>
            <person name="Schmutz J."/>
            <person name="Larimer F."/>
            <person name="Land M."/>
            <person name="Hauser L."/>
            <person name="Kyrpides N."/>
            <person name="Mikhailova N."/>
            <person name="Nelson K."/>
            <person name="Gogarten J.P."/>
            <person name="Noll K."/>
            <person name="Richardson P."/>
        </authorList>
    </citation>
    <scope>NUCLEOTIDE SEQUENCE [LARGE SCALE GENOMIC DNA]</scope>
    <source>
        <strain>ATCC 35602 / DSM 5306 / Rt17-B1</strain>
    </source>
</reference>
<evidence type="ECO:0000255" key="1">
    <source>
        <dbReference type="HAMAP-Rule" id="MF_01309"/>
    </source>
</evidence>
<evidence type="ECO:0000305" key="2"/>
<protein>
    <recommendedName>
        <fullName evidence="1">Small ribosomal subunit protein uS3</fullName>
    </recommendedName>
    <alternativeName>
        <fullName evidence="2">30S ribosomal protein S3</fullName>
    </alternativeName>
</protein>
<keyword id="KW-1185">Reference proteome</keyword>
<keyword id="KW-0687">Ribonucleoprotein</keyword>
<keyword id="KW-0689">Ribosomal protein</keyword>
<keyword id="KW-0694">RNA-binding</keyword>
<keyword id="KW-0699">rRNA-binding</keyword>
<name>RS3_FERNB</name>
<proteinExistence type="inferred from homology"/>
<accession>A7HM46</accession>